<gene>
    <name evidence="1" type="primary">der</name>
    <name type="synonym">engA</name>
    <name type="ordered locus">Psyr_1252</name>
</gene>
<proteinExistence type="inferred from homology"/>
<name>DER_PSEU2</name>
<sequence>MVPVIALVGRPNVGKSTMFNRLTRTRDAIVGDLSGLTRDRQYGEAKWQGRSYILIDTGGISGDEHGMDEKMAEQSLLAIEEADVVLFLVDARAGYTAADQMIGEHLRKRNKRSYVVANKIDNIDENLARAEFSPMGLGDAIPVAGAHGRGISQMLEIALREFPRDEDEPEEGVEVEEVAEGQEAKRIPGPSEKDGIKIAIIGRPNVGKSTLVNRMLGEDRVIVYDEPGTTRDSIYIPFERNEEKYTLIDTAGVRKRGKIHEEVEKFSVVKTLQAIKDANVVIFVMDAREGVVDHDLNLLGFALEAGRALVIALNKWDGMTPGERDFVKIELERRLFFVDFADIHFISAMHGTGVGNLYQSVQNSFKSAVTRWPTSRLTQILEDAVSEHAPPMVGSRRIKLRYAHLGGANPPLIVIHGNQVEKVPKSYVRYLENTYRRVLKLVGTPIRIEFKGGENPYEGNKNTLTDRQVNKKRRMMSHHKKADKKRRDKR</sequence>
<protein>
    <recommendedName>
        <fullName evidence="1">GTPase Der</fullName>
    </recommendedName>
    <alternativeName>
        <fullName evidence="1">GTP-binding protein EngA</fullName>
    </alternativeName>
</protein>
<organism>
    <name type="scientific">Pseudomonas syringae pv. syringae (strain B728a)</name>
    <dbReference type="NCBI Taxonomy" id="205918"/>
    <lineage>
        <taxon>Bacteria</taxon>
        <taxon>Pseudomonadati</taxon>
        <taxon>Pseudomonadota</taxon>
        <taxon>Gammaproteobacteria</taxon>
        <taxon>Pseudomonadales</taxon>
        <taxon>Pseudomonadaceae</taxon>
        <taxon>Pseudomonas</taxon>
        <taxon>Pseudomonas syringae</taxon>
    </lineage>
</organism>
<feature type="chain" id="PRO_1000011706" description="GTPase Der">
    <location>
        <begin position="1"/>
        <end position="490"/>
    </location>
</feature>
<feature type="domain" description="EngA-type G 1">
    <location>
        <begin position="3"/>
        <end position="166"/>
    </location>
</feature>
<feature type="domain" description="EngA-type G 2">
    <location>
        <begin position="196"/>
        <end position="369"/>
    </location>
</feature>
<feature type="domain" description="KH-like" evidence="1">
    <location>
        <begin position="370"/>
        <end position="454"/>
    </location>
</feature>
<feature type="region of interest" description="Disordered" evidence="2">
    <location>
        <begin position="452"/>
        <end position="490"/>
    </location>
</feature>
<feature type="compositionally biased region" description="Basic residues" evidence="2">
    <location>
        <begin position="470"/>
        <end position="490"/>
    </location>
</feature>
<feature type="binding site" evidence="1">
    <location>
        <begin position="9"/>
        <end position="16"/>
    </location>
    <ligand>
        <name>GTP</name>
        <dbReference type="ChEBI" id="CHEBI:37565"/>
        <label>1</label>
    </ligand>
</feature>
<feature type="binding site" evidence="1">
    <location>
        <begin position="56"/>
        <end position="60"/>
    </location>
    <ligand>
        <name>GTP</name>
        <dbReference type="ChEBI" id="CHEBI:37565"/>
        <label>1</label>
    </ligand>
</feature>
<feature type="binding site" evidence="1">
    <location>
        <begin position="118"/>
        <end position="121"/>
    </location>
    <ligand>
        <name>GTP</name>
        <dbReference type="ChEBI" id="CHEBI:37565"/>
        <label>1</label>
    </ligand>
</feature>
<feature type="binding site" evidence="1">
    <location>
        <begin position="202"/>
        <end position="209"/>
    </location>
    <ligand>
        <name>GTP</name>
        <dbReference type="ChEBI" id="CHEBI:37565"/>
        <label>2</label>
    </ligand>
</feature>
<feature type="binding site" evidence="1">
    <location>
        <begin position="249"/>
        <end position="253"/>
    </location>
    <ligand>
        <name>GTP</name>
        <dbReference type="ChEBI" id="CHEBI:37565"/>
        <label>2</label>
    </ligand>
</feature>
<feature type="binding site" evidence="1">
    <location>
        <begin position="314"/>
        <end position="317"/>
    </location>
    <ligand>
        <name>GTP</name>
        <dbReference type="ChEBI" id="CHEBI:37565"/>
        <label>2</label>
    </ligand>
</feature>
<accession>Q4ZX19</accession>
<evidence type="ECO:0000255" key="1">
    <source>
        <dbReference type="HAMAP-Rule" id="MF_00195"/>
    </source>
</evidence>
<evidence type="ECO:0000256" key="2">
    <source>
        <dbReference type="SAM" id="MobiDB-lite"/>
    </source>
</evidence>
<keyword id="KW-0342">GTP-binding</keyword>
<keyword id="KW-0547">Nucleotide-binding</keyword>
<keyword id="KW-0677">Repeat</keyword>
<keyword id="KW-0690">Ribosome biogenesis</keyword>
<reference key="1">
    <citation type="journal article" date="2005" name="Proc. Natl. Acad. Sci. U.S.A.">
        <title>Comparison of the complete genome sequences of Pseudomonas syringae pv. syringae B728a and pv. tomato DC3000.</title>
        <authorList>
            <person name="Feil H."/>
            <person name="Feil W.S."/>
            <person name="Chain P."/>
            <person name="Larimer F."/>
            <person name="Dibartolo G."/>
            <person name="Copeland A."/>
            <person name="Lykidis A."/>
            <person name="Trong S."/>
            <person name="Nolan M."/>
            <person name="Goltsman E."/>
            <person name="Thiel J."/>
            <person name="Malfatti S."/>
            <person name="Loper J.E."/>
            <person name="Lapidus A."/>
            <person name="Detter J.C."/>
            <person name="Land M."/>
            <person name="Richardson P.M."/>
            <person name="Kyrpides N.C."/>
            <person name="Ivanova N."/>
            <person name="Lindow S.E."/>
        </authorList>
    </citation>
    <scope>NUCLEOTIDE SEQUENCE [LARGE SCALE GENOMIC DNA]</scope>
    <source>
        <strain>B728a</strain>
    </source>
</reference>
<dbReference type="EMBL" id="CP000075">
    <property type="protein sequence ID" value="AAY36303.1"/>
    <property type="molecule type" value="Genomic_DNA"/>
</dbReference>
<dbReference type="RefSeq" id="WP_011266911.1">
    <property type="nucleotide sequence ID" value="NC_007005.1"/>
</dbReference>
<dbReference type="RefSeq" id="YP_234341.1">
    <property type="nucleotide sequence ID" value="NC_007005.1"/>
</dbReference>
<dbReference type="SMR" id="Q4ZX19"/>
<dbReference type="STRING" id="205918.Psyr_1252"/>
<dbReference type="KEGG" id="psb:Psyr_1252"/>
<dbReference type="PATRIC" id="fig|205918.7.peg.1284"/>
<dbReference type="eggNOG" id="COG1160">
    <property type="taxonomic scope" value="Bacteria"/>
</dbReference>
<dbReference type="HOGENOM" id="CLU_016077_6_2_6"/>
<dbReference type="OrthoDB" id="9805918at2"/>
<dbReference type="Proteomes" id="UP000000426">
    <property type="component" value="Chromosome"/>
</dbReference>
<dbReference type="GO" id="GO:0005525">
    <property type="term" value="F:GTP binding"/>
    <property type="evidence" value="ECO:0007669"/>
    <property type="project" value="UniProtKB-UniRule"/>
</dbReference>
<dbReference type="GO" id="GO:0043022">
    <property type="term" value="F:ribosome binding"/>
    <property type="evidence" value="ECO:0007669"/>
    <property type="project" value="TreeGrafter"/>
</dbReference>
<dbReference type="GO" id="GO:0042254">
    <property type="term" value="P:ribosome biogenesis"/>
    <property type="evidence" value="ECO:0007669"/>
    <property type="project" value="UniProtKB-KW"/>
</dbReference>
<dbReference type="CDD" id="cd01894">
    <property type="entry name" value="EngA1"/>
    <property type="match status" value="1"/>
</dbReference>
<dbReference type="CDD" id="cd01895">
    <property type="entry name" value="EngA2"/>
    <property type="match status" value="1"/>
</dbReference>
<dbReference type="FunFam" id="3.30.300.20:FF:000004">
    <property type="entry name" value="GTPase Der"/>
    <property type="match status" value="1"/>
</dbReference>
<dbReference type="FunFam" id="3.40.50.300:FF:000040">
    <property type="entry name" value="GTPase Der"/>
    <property type="match status" value="1"/>
</dbReference>
<dbReference type="FunFam" id="3.40.50.300:FF:000057">
    <property type="entry name" value="GTPase Der"/>
    <property type="match status" value="1"/>
</dbReference>
<dbReference type="Gene3D" id="3.30.300.20">
    <property type="match status" value="1"/>
</dbReference>
<dbReference type="Gene3D" id="3.40.50.300">
    <property type="entry name" value="P-loop containing nucleotide triphosphate hydrolases"/>
    <property type="match status" value="2"/>
</dbReference>
<dbReference type="HAMAP" id="MF_00195">
    <property type="entry name" value="GTPase_Der"/>
    <property type="match status" value="1"/>
</dbReference>
<dbReference type="InterPro" id="IPR031166">
    <property type="entry name" value="G_ENGA"/>
</dbReference>
<dbReference type="InterPro" id="IPR006073">
    <property type="entry name" value="GTP-bd"/>
</dbReference>
<dbReference type="InterPro" id="IPR016484">
    <property type="entry name" value="GTPase_Der"/>
</dbReference>
<dbReference type="InterPro" id="IPR032859">
    <property type="entry name" value="KH_dom-like"/>
</dbReference>
<dbReference type="InterPro" id="IPR015946">
    <property type="entry name" value="KH_dom-like_a/b"/>
</dbReference>
<dbReference type="InterPro" id="IPR027417">
    <property type="entry name" value="P-loop_NTPase"/>
</dbReference>
<dbReference type="InterPro" id="IPR005225">
    <property type="entry name" value="Small_GTP-bd"/>
</dbReference>
<dbReference type="NCBIfam" id="TIGR03594">
    <property type="entry name" value="GTPase_EngA"/>
    <property type="match status" value="1"/>
</dbReference>
<dbReference type="NCBIfam" id="TIGR00231">
    <property type="entry name" value="small_GTP"/>
    <property type="match status" value="2"/>
</dbReference>
<dbReference type="PANTHER" id="PTHR43834">
    <property type="entry name" value="GTPASE DER"/>
    <property type="match status" value="1"/>
</dbReference>
<dbReference type="PANTHER" id="PTHR43834:SF6">
    <property type="entry name" value="GTPASE DER"/>
    <property type="match status" value="1"/>
</dbReference>
<dbReference type="Pfam" id="PF14714">
    <property type="entry name" value="KH_dom-like"/>
    <property type="match status" value="1"/>
</dbReference>
<dbReference type="Pfam" id="PF01926">
    <property type="entry name" value="MMR_HSR1"/>
    <property type="match status" value="2"/>
</dbReference>
<dbReference type="PIRSF" id="PIRSF006485">
    <property type="entry name" value="GTP-binding_EngA"/>
    <property type="match status" value="1"/>
</dbReference>
<dbReference type="PRINTS" id="PR00326">
    <property type="entry name" value="GTP1OBG"/>
</dbReference>
<dbReference type="SUPFAM" id="SSF52540">
    <property type="entry name" value="P-loop containing nucleoside triphosphate hydrolases"/>
    <property type="match status" value="2"/>
</dbReference>
<dbReference type="PROSITE" id="PS51712">
    <property type="entry name" value="G_ENGA"/>
    <property type="match status" value="2"/>
</dbReference>
<comment type="function">
    <text evidence="1">GTPase that plays an essential role in the late steps of ribosome biogenesis.</text>
</comment>
<comment type="subunit">
    <text evidence="1">Associates with the 50S ribosomal subunit.</text>
</comment>
<comment type="similarity">
    <text evidence="1">Belongs to the TRAFAC class TrmE-Era-EngA-EngB-Septin-like GTPase superfamily. EngA (Der) GTPase family.</text>
</comment>